<keyword id="KW-0238">DNA-binding</keyword>
<keyword id="KW-0479">Metal-binding</keyword>
<keyword id="KW-0539">Nucleus</keyword>
<keyword id="KW-0597">Phosphoprotein</keyword>
<keyword id="KW-1185">Reference proteome</keyword>
<keyword id="KW-0804">Transcription</keyword>
<keyword id="KW-0805">Transcription regulation</keyword>
<keyword id="KW-0862">Zinc</keyword>
<name>YN2B_SCHPO</name>
<dbReference type="EMBL" id="CU329671">
    <property type="protein sequence ID" value="CAA19177.1"/>
    <property type="molecule type" value="Genomic_DNA"/>
</dbReference>
<dbReference type="PIR" id="T40527">
    <property type="entry name" value="T40527"/>
</dbReference>
<dbReference type="RefSeq" id="NP_595324.1">
    <property type="nucleotide sequence ID" value="NM_001021231.2"/>
</dbReference>
<dbReference type="BioGRID" id="277583">
    <property type="interactions" value="6"/>
</dbReference>
<dbReference type="STRING" id="284812.O59746"/>
<dbReference type="iPTMnet" id="O59746"/>
<dbReference type="PaxDb" id="4896-SPBC530.11c.1"/>
<dbReference type="EnsemblFungi" id="SPBC530.11c.1">
    <property type="protein sequence ID" value="SPBC530.11c.1:pep"/>
    <property type="gene ID" value="SPBC530.11c"/>
</dbReference>
<dbReference type="KEGG" id="spo:2541068"/>
<dbReference type="PomBase" id="SPBC530.11c"/>
<dbReference type="VEuPathDB" id="FungiDB:SPBC530.11c"/>
<dbReference type="eggNOG" id="ENOG502QR2H">
    <property type="taxonomic scope" value="Eukaryota"/>
</dbReference>
<dbReference type="HOGENOM" id="CLU_345179_0_0_1"/>
<dbReference type="InParanoid" id="O59746"/>
<dbReference type="OMA" id="LWANAVM"/>
<dbReference type="PhylomeDB" id="O59746"/>
<dbReference type="PRO" id="PR:O59746"/>
<dbReference type="Proteomes" id="UP000002485">
    <property type="component" value="Chromosome II"/>
</dbReference>
<dbReference type="GO" id="GO:0005634">
    <property type="term" value="C:nucleus"/>
    <property type="evidence" value="ECO:0007005"/>
    <property type="project" value="PomBase"/>
</dbReference>
<dbReference type="GO" id="GO:0000981">
    <property type="term" value="F:DNA-binding transcription factor activity, RNA polymerase II-specific"/>
    <property type="evidence" value="ECO:0000255"/>
    <property type="project" value="PomBase"/>
</dbReference>
<dbReference type="GO" id="GO:0000978">
    <property type="term" value="F:RNA polymerase II cis-regulatory region sequence-specific DNA binding"/>
    <property type="evidence" value="ECO:0000255"/>
    <property type="project" value="PomBase"/>
</dbReference>
<dbReference type="GO" id="GO:0008270">
    <property type="term" value="F:zinc ion binding"/>
    <property type="evidence" value="ECO:0007669"/>
    <property type="project" value="InterPro"/>
</dbReference>
<dbReference type="GO" id="GO:0006351">
    <property type="term" value="P:DNA-templated transcription"/>
    <property type="evidence" value="ECO:0007669"/>
    <property type="project" value="InterPro"/>
</dbReference>
<dbReference type="GO" id="GO:0006357">
    <property type="term" value="P:regulation of transcription by RNA polymerase II"/>
    <property type="evidence" value="ECO:0000255"/>
    <property type="project" value="PomBase"/>
</dbReference>
<dbReference type="CDD" id="cd12148">
    <property type="entry name" value="fungal_TF_MHR"/>
    <property type="match status" value="1"/>
</dbReference>
<dbReference type="InterPro" id="IPR050815">
    <property type="entry name" value="TF_fung"/>
</dbReference>
<dbReference type="InterPro" id="IPR007219">
    <property type="entry name" value="Transcription_factor_dom_fun"/>
</dbReference>
<dbReference type="PANTHER" id="PTHR47338:SF5">
    <property type="entry name" value="ZN(II)2CYS6 TRANSCRIPTION FACTOR (EUROFUNG)"/>
    <property type="match status" value="1"/>
</dbReference>
<dbReference type="PANTHER" id="PTHR47338">
    <property type="entry name" value="ZN(II)2CYS6 TRANSCRIPTION FACTOR (EUROFUNG)-RELATED"/>
    <property type="match status" value="1"/>
</dbReference>
<dbReference type="Pfam" id="PF04082">
    <property type="entry name" value="Fungal_trans"/>
    <property type="match status" value="1"/>
</dbReference>
<dbReference type="SMART" id="SM00906">
    <property type="entry name" value="Fungal_trans"/>
    <property type="match status" value="1"/>
</dbReference>
<comment type="subcellular location">
    <subcellularLocation>
        <location evidence="3">Nucleus</location>
    </subcellularLocation>
</comment>
<gene>
    <name type="ORF">SPBC530.11c</name>
</gene>
<sequence>MLENSTAVHGVRLSDSPEDPFLRKRLASNTQLNQKKIRFTENENDLSPERAQKEPVSIPHGRYTWSTSPDTDSSHLPSTPPTVDIPFHHPHTIHSPTFTLSVSPDSQSSSATHQNDYISSPHADFSFSPPASKIQSHEPLNDMAAVHPLRPSHVSGPLSPPEPKAASVDHSINPAYNASFRLPDGPLWTEGSENLPSLDIQLQLAHIYFIYAHGQPYVLFHRDSFMEALKSQRLPPVLVLAMCAVAIRFWQTDKYDKNELFEQWFNRASAIAMANFDKLDLVYVASFVMLSYVCAATSKYWMFAGMAIRMVVALHPNKTPNLPYYDRPDSPLPFEIRVQLTRRLFWDCFMLDRLNSLYCNTQFLNLEDIHVPLPMRETLFMYKAHAVTETLTGKPSSPDSFTNANPTTAPIVSRNAQDNMGMLAYMIRMVSIWGRVVRCLKSYSQKQSNPYPFWHAKSTFKQLDQELYEWEKNLPNRLRYSRQTLLSYHMMGQGGQFACLHLIFLQIHLYVHRYAASISSVPFSHVKSPPTVFENQSAVLASQCANAICRIIQDCTELSISLAAPFTASSAYLAGTVLLYHYITRGSEVQASKAAVHLPIAKRHLAQLSVYWPALGMYAKALDAIAFHQGALVTPSVPPVIATVSKTNTTNTGVQQRGNVGVTTTGSILTQSSPALPVQPVPLAYSKPAPTTKSSLTELAYNTNVSLPPRSPGTGSLAAGNLPNEKAPSLMTMVNGGPVPGDIGEASIPVVQNLQPSTAHVDPESDLGRVIKICDWYQSPSSDVLLSKPLQLNSSEEMEQQCIDLSRHNTLLNLSSYGI</sequence>
<reference key="1">
    <citation type="journal article" date="2002" name="Nature">
        <title>The genome sequence of Schizosaccharomyces pombe.</title>
        <authorList>
            <person name="Wood V."/>
            <person name="Gwilliam R."/>
            <person name="Rajandream M.A."/>
            <person name="Lyne M.H."/>
            <person name="Lyne R."/>
            <person name="Stewart A."/>
            <person name="Sgouros J.G."/>
            <person name="Peat N."/>
            <person name="Hayles J."/>
            <person name="Baker S.G."/>
            <person name="Basham D."/>
            <person name="Bowman S."/>
            <person name="Brooks K."/>
            <person name="Brown D."/>
            <person name="Brown S."/>
            <person name="Chillingworth T."/>
            <person name="Churcher C.M."/>
            <person name="Collins M."/>
            <person name="Connor R."/>
            <person name="Cronin A."/>
            <person name="Davis P."/>
            <person name="Feltwell T."/>
            <person name="Fraser A."/>
            <person name="Gentles S."/>
            <person name="Goble A."/>
            <person name="Hamlin N."/>
            <person name="Harris D.E."/>
            <person name="Hidalgo J."/>
            <person name="Hodgson G."/>
            <person name="Holroyd S."/>
            <person name="Hornsby T."/>
            <person name="Howarth S."/>
            <person name="Huckle E.J."/>
            <person name="Hunt S."/>
            <person name="Jagels K."/>
            <person name="James K.D."/>
            <person name="Jones L."/>
            <person name="Jones M."/>
            <person name="Leather S."/>
            <person name="McDonald S."/>
            <person name="McLean J."/>
            <person name="Mooney P."/>
            <person name="Moule S."/>
            <person name="Mungall K.L."/>
            <person name="Murphy L.D."/>
            <person name="Niblett D."/>
            <person name="Odell C."/>
            <person name="Oliver K."/>
            <person name="O'Neil S."/>
            <person name="Pearson D."/>
            <person name="Quail M.A."/>
            <person name="Rabbinowitsch E."/>
            <person name="Rutherford K.M."/>
            <person name="Rutter S."/>
            <person name="Saunders D."/>
            <person name="Seeger K."/>
            <person name="Sharp S."/>
            <person name="Skelton J."/>
            <person name="Simmonds M.N."/>
            <person name="Squares R."/>
            <person name="Squares S."/>
            <person name="Stevens K."/>
            <person name="Taylor K."/>
            <person name="Taylor R.G."/>
            <person name="Tivey A."/>
            <person name="Walsh S.V."/>
            <person name="Warren T."/>
            <person name="Whitehead S."/>
            <person name="Woodward J.R."/>
            <person name="Volckaert G."/>
            <person name="Aert R."/>
            <person name="Robben J."/>
            <person name="Grymonprez B."/>
            <person name="Weltjens I."/>
            <person name="Vanstreels E."/>
            <person name="Rieger M."/>
            <person name="Schaefer M."/>
            <person name="Mueller-Auer S."/>
            <person name="Gabel C."/>
            <person name="Fuchs M."/>
            <person name="Duesterhoeft A."/>
            <person name="Fritzc C."/>
            <person name="Holzer E."/>
            <person name="Moestl D."/>
            <person name="Hilbert H."/>
            <person name="Borzym K."/>
            <person name="Langer I."/>
            <person name="Beck A."/>
            <person name="Lehrach H."/>
            <person name="Reinhardt R."/>
            <person name="Pohl T.M."/>
            <person name="Eger P."/>
            <person name="Zimmermann W."/>
            <person name="Wedler H."/>
            <person name="Wambutt R."/>
            <person name="Purnelle B."/>
            <person name="Goffeau A."/>
            <person name="Cadieu E."/>
            <person name="Dreano S."/>
            <person name="Gloux S."/>
            <person name="Lelaure V."/>
            <person name="Mottier S."/>
            <person name="Galibert F."/>
            <person name="Aves S.J."/>
            <person name="Xiang Z."/>
            <person name="Hunt C."/>
            <person name="Moore K."/>
            <person name="Hurst S.M."/>
            <person name="Lucas M."/>
            <person name="Rochet M."/>
            <person name="Gaillardin C."/>
            <person name="Tallada V.A."/>
            <person name="Garzon A."/>
            <person name="Thode G."/>
            <person name="Daga R.R."/>
            <person name="Cruzado L."/>
            <person name="Jimenez J."/>
            <person name="Sanchez M."/>
            <person name="del Rey F."/>
            <person name="Benito J."/>
            <person name="Dominguez A."/>
            <person name="Revuelta J.L."/>
            <person name="Moreno S."/>
            <person name="Armstrong J."/>
            <person name="Forsburg S.L."/>
            <person name="Cerutti L."/>
            <person name="Lowe T."/>
            <person name="McCombie W.R."/>
            <person name="Paulsen I."/>
            <person name="Potashkin J."/>
            <person name="Shpakovski G.V."/>
            <person name="Ussery D."/>
            <person name="Barrell B.G."/>
            <person name="Nurse P."/>
        </authorList>
    </citation>
    <scope>NUCLEOTIDE SEQUENCE [LARGE SCALE GENOMIC DNA]</scope>
    <source>
        <strain>972 / ATCC 24843</strain>
    </source>
</reference>
<reference key="2">
    <citation type="journal article" date="2006" name="Nat. Biotechnol.">
        <title>ORFeome cloning and global analysis of protein localization in the fission yeast Schizosaccharomyces pombe.</title>
        <authorList>
            <person name="Matsuyama A."/>
            <person name="Arai R."/>
            <person name="Yashiroda Y."/>
            <person name="Shirai A."/>
            <person name="Kamata A."/>
            <person name="Sekido S."/>
            <person name="Kobayashi Y."/>
            <person name="Hashimoto A."/>
            <person name="Hamamoto M."/>
            <person name="Hiraoka Y."/>
            <person name="Horinouchi S."/>
            <person name="Yoshida M."/>
        </authorList>
    </citation>
    <scope>SUBCELLULAR LOCATION [LARGE SCALE ANALYSIS]</scope>
</reference>
<reference key="3">
    <citation type="journal article" date="2008" name="J. Proteome Res.">
        <title>Phosphoproteome analysis of fission yeast.</title>
        <authorList>
            <person name="Wilson-Grady J.T."/>
            <person name="Villen J."/>
            <person name="Gygi S.P."/>
        </authorList>
    </citation>
    <scope>PHOSPHORYLATION [LARGE SCALE ANALYSIS] AT SER-16</scope>
    <scope>IDENTIFICATION BY MASS SPECTROMETRY</scope>
</reference>
<feature type="chain" id="PRO_0000316609" description="Uncharacterized transcriptional regulatory protein C530.11c">
    <location>
        <begin position="1"/>
        <end position="819"/>
    </location>
</feature>
<feature type="DNA-binding region" description="Zn(2)-C6 fungal-type" evidence="1">
    <location>
        <begin position="36"/>
        <end position="63"/>
    </location>
</feature>
<feature type="region of interest" description="Disordered" evidence="2">
    <location>
        <begin position="28"/>
        <end position="83"/>
    </location>
</feature>
<feature type="region of interest" description="Disordered" evidence="2">
    <location>
        <begin position="96"/>
        <end position="134"/>
    </location>
</feature>
<feature type="compositionally biased region" description="Polar residues" evidence="2">
    <location>
        <begin position="64"/>
        <end position="77"/>
    </location>
</feature>
<feature type="compositionally biased region" description="Polar residues" evidence="2">
    <location>
        <begin position="96"/>
        <end position="118"/>
    </location>
</feature>
<feature type="modified residue" description="Phosphoserine" evidence="4">
    <location>
        <position position="16"/>
    </location>
</feature>
<protein>
    <recommendedName>
        <fullName>Uncharacterized transcriptional regulatory protein C530.11c</fullName>
    </recommendedName>
</protein>
<evidence type="ECO:0000250" key="1"/>
<evidence type="ECO:0000256" key="2">
    <source>
        <dbReference type="SAM" id="MobiDB-lite"/>
    </source>
</evidence>
<evidence type="ECO:0000269" key="3">
    <source>
    </source>
</evidence>
<evidence type="ECO:0000269" key="4">
    <source>
    </source>
</evidence>
<proteinExistence type="evidence at protein level"/>
<accession>O59746</accession>
<organism>
    <name type="scientific">Schizosaccharomyces pombe (strain 972 / ATCC 24843)</name>
    <name type="common">Fission yeast</name>
    <dbReference type="NCBI Taxonomy" id="284812"/>
    <lineage>
        <taxon>Eukaryota</taxon>
        <taxon>Fungi</taxon>
        <taxon>Dikarya</taxon>
        <taxon>Ascomycota</taxon>
        <taxon>Taphrinomycotina</taxon>
        <taxon>Schizosaccharomycetes</taxon>
        <taxon>Schizosaccharomycetales</taxon>
        <taxon>Schizosaccharomycetaceae</taxon>
        <taxon>Schizosaccharomyces</taxon>
    </lineage>
</organism>